<evidence type="ECO:0000250" key="1">
    <source>
        <dbReference type="UniProtKB" id="E0VIU9"/>
    </source>
</evidence>
<evidence type="ECO:0000250" key="2">
    <source>
        <dbReference type="UniProtKB" id="O60260"/>
    </source>
</evidence>
<evidence type="ECO:0000255" key="3"/>
<evidence type="ECO:0000255" key="4">
    <source>
        <dbReference type="PROSITE-ProRule" id="PRU00214"/>
    </source>
</evidence>
<evidence type="ECO:0000255" key="5">
    <source>
        <dbReference type="PROSITE-ProRule" id="PRU01221"/>
    </source>
</evidence>
<evidence type="ECO:0000269" key="6">
    <source>
    </source>
</evidence>
<evidence type="ECO:0000269" key="7">
    <source>
    </source>
</evidence>
<evidence type="ECO:0000269" key="8">
    <source>
    </source>
</evidence>
<evidence type="ECO:0000269" key="9">
    <source>
    </source>
</evidence>
<evidence type="ECO:0000269" key="10">
    <source>
    </source>
</evidence>
<evidence type="ECO:0000269" key="11">
    <source>
    </source>
</evidence>
<evidence type="ECO:0000269" key="12">
    <source>
    </source>
</evidence>
<evidence type="ECO:0000269" key="13">
    <source>
    </source>
</evidence>
<evidence type="ECO:0000269" key="14">
    <source>
    </source>
</evidence>
<evidence type="ECO:0000269" key="15">
    <source>
    </source>
</evidence>
<evidence type="ECO:0000269" key="16">
    <source>
    </source>
</evidence>
<evidence type="ECO:0000269" key="17">
    <source>
    </source>
</evidence>
<evidence type="ECO:0000269" key="18">
    <source>
    </source>
</evidence>
<evidence type="ECO:0000269" key="19">
    <source>
    </source>
</evidence>
<evidence type="ECO:0000269" key="20">
    <source>
    </source>
</evidence>
<evidence type="ECO:0000269" key="21">
    <source>
    </source>
</evidence>
<evidence type="ECO:0000269" key="22">
    <source>
    </source>
</evidence>
<evidence type="ECO:0000269" key="23">
    <source>
    </source>
</evidence>
<evidence type="ECO:0000269" key="24">
    <source>
    </source>
</evidence>
<evidence type="ECO:0000269" key="25">
    <source>
    </source>
</evidence>
<evidence type="ECO:0000269" key="26">
    <source>
    </source>
</evidence>
<evidence type="ECO:0000269" key="27">
    <source>
    </source>
</evidence>
<evidence type="ECO:0000269" key="28">
    <source>
    </source>
</evidence>
<evidence type="ECO:0000269" key="29">
    <source>
    </source>
</evidence>
<evidence type="ECO:0000269" key="30">
    <source>
    </source>
</evidence>
<evidence type="ECO:0000269" key="31">
    <source>
    </source>
</evidence>
<evidence type="ECO:0000269" key="32">
    <source>
    </source>
</evidence>
<evidence type="ECO:0000269" key="33">
    <source>
    </source>
</evidence>
<evidence type="ECO:0000269" key="34">
    <source>
    </source>
</evidence>
<evidence type="ECO:0000269" key="35">
    <source>
    </source>
</evidence>
<evidence type="ECO:0000269" key="36">
    <source>
    </source>
</evidence>
<evidence type="ECO:0000269" key="37">
    <source>
    </source>
</evidence>
<evidence type="ECO:0000303" key="38">
    <source>
    </source>
</evidence>
<evidence type="ECO:0000303" key="39">
    <source>
    </source>
</evidence>
<evidence type="ECO:0000305" key="40"/>
<evidence type="ECO:0000312" key="41">
    <source>
        <dbReference type="EMBL" id="AAL13983.1"/>
    </source>
</evidence>
<evidence type="ECO:0000312" key="42">
    <source>
        <dbReference type="EMBL" id="AAM18800.2"/>
    </source>
</evidence>
<evidence type="ECO:0000312" key="43">
    <source>
        <dbReference type="EMBL" id="AAO48768.1"/>
    </source>
</evidence>
<evidence type="ECO:0000312" key="44">
    <source>
        <dbReference type="EMBL" id="AAP20871.1"/>
    </source>
</evidence>
<evidence type="ECO:0000312" key="45">
    <source>
        <dbReference type="EMBL" id="ACH95278.1"/>
    </source>
</evidence>
<evidence type="ECO:0000312" key="46">
    <source>
        <dbReference type="FlyBase" id="FBgn0041100"/>
    </source>
</evidence>
<evidence type="ECO:0000312" key="47">
    <source>
        <dbReference type="Proteomes" id="UP000000803"/>
    </source>
</evidence>
<evidence type="ECO:0007744" key="48">
    <source>
        <dbReference type="PDB" id="2LWR"/>
    </source>
</evidence>
<evidence type="ECO:0007744" key="49">
    <source>
        <dbReference type="PDB" id="2M48"/>
    </source>
</evidence>
<evidence type="ECO:0007829" key="50">
    <source>
        <dbReference type="PDB" id="2LWR"/>
    </source>
</evidence>
<evidence type="ECO:0007829" key="51">
    <source>
        <dbReference type="PDB" id="2M48"/>
    </source>
</evidence>
<evidence type="ECO:0007829" key="52">
    <source>
        <dbReference type="PDB" id="9C5E"/>
    </source>
</evidence>
<comment type="function">
    <text evidence="6 8 9 10 11 12 13 14 15 16 17 19 20 21 22 23 24 25 26 27 29 30 31 32 33 34 35 36 37">E3 ubiquitin-protein ligase which accepts ubiquitin from E2 ubiquitin-conjugating enzymes in the form of a thioester and then directly transfers the ubiquitin to targeted substrates, such as Paris, Marf, Opa1, Miro, pnut, Septin1, Tom20 and porin (PubMed:16002472, PubMed:17456438, PubMed:20194754, PubMed:23770917, PubMed:24192653, PubMed:24901221, PubMed:25474007, PubMed:27906179, PubMed:31714929, PubMed:32047033, PubMed:32138754). Mediates monoubiquitination as well as 'Lys-6', 'Lys-11', 'Lys-48'-linked and 'Lys-63'-linked polyubiquitination of substrates, depending on the context (PubMed:18957282, PubMed:23650379, PubMed:24901221, PubMed:25474007, PubMed:27906179, PubMed:31714929, PubMed:32047033). Protects against mitochondrial dysfunction during cellular stress, by acting downstream of Pink1, to coordinate mitochondrial quality control mechanisms that remove and replace dysfunctional mitochondrial components (PubMed:12642658, PubMed:15073152, PubMed:16672980, PubMed:16672981, PubMed:17123504, PubMed:18230723, PubMed:18443288, PubMed:18799731, PubMed:18957282, PubMed:20194754, PubMed:20496123, PubMed:23509287, PubMed:24192653, PubMed:24901221, PubMed:25474007, PubMed:27906179, PubMed:29497364, PubMed:32047033). Depending on the severity of mitochondrial damage and/or dysfunction, activity ranges from preventing apoptosis and stimulating mitochondrial biogenesis to regulating mitochondrial dynamics and eliminating severely damaged mitochondria via mitophagy (PubMed:12642658, PubMed:15073152, PubMed:16002472, PubMed:16672980, PubMed:16672981, PubMed:17123504, PubMed:18230723, PubMed:18443288, PubMed:18799731, PubMed:18957282, PubMed:20194754, PubMed:20496123, PubMed:23509287, PubMed:24192653, PubMed:24901221, PubMed:25474007, PubMed:27906179, PubMed:29497364, PubMed:32047033). Appears to be particularly important in maintaining the physiology and function of cells with high energy demands that are undergoing stress or altered metabolic environment, including spermatids, muscle cells and neurons such as the dopaminergic (DA) neurons (PubMed:12642658, PubMed:15073152, PubMed:16002472, PubMed:16672980, PubMed:17123504, PubMed:18799731, PubMed:20483372, PubMed:22396657, PubMed:24901221, PubMed:28435104, PubMed:29497364, PubMed:31714929). Activation and recruitment onto the outer membrane of damaged/dysfunctional mitochondria (OMM) requires Pink1-mediated phosphorylation of both park and ubiquitin (PubMed:18230723, PubMed:18799731, PubMed:18957282, PubMed:20194754, PubMed:22396657, PubMed:24901221, PubMed:25474007, PubMed:27906179). In depolarized mitochondria, mediates the decision between mitophagy or preventing apoptosis by inducing either the poly- or monoubiquitination of porin/VDAC; polyubiquitination of porin promotes mitophagy, while monoubiquitination of porin decreases mitochondrial calcium influx which ultimately inhibits apoptosis (PubMed:32047033). When cellular stress results in irreversible mitochondrial damage, promotes the autophagic degradation of dysfunctional depolarized mitochondria (mitophagy) by promoting the ubiquitination of mitochondrial proteins (PubMed:16672980, PubMed:16672981, PubMed:18957282, PubMed:20194754, PubMed:23509287, PubMed:24192653, PubMed:25474007, PubMed:29497364). Preferentially assembles 'Lys-6'-, 'Lys-11'- and 'Lys-63'-linked polyubiquitin chains following mitochondrial damage, leading to mitophagy (PubMed:23650379, PubMed:32047033). In developing tissues, inhibits JNK-mediated apoptosis by negatively regulating bsk transcription (PubMed:16002472, PubMed:20496123). The Pink1-park pathway also promotes fission and/or inhibits fusion of damaged mitochondria by mediating the ubiquitination and subsequent degradation of proteins involved in mitochondrial fusion/fission such as Marf, Opa1 and fzo (PubMed:17123504, PubMed:18230723, PubMed:18443288, PubMed:18799731, PubMed:20194754, PubMed:23650379, PubMed:24192653, PubMed:24901221, PubMed:29497364). This prevents the refusion of unhealthy mitochondria with the healthy mitochondrial network and/or initiates mitochondrial fragmentation facilitating their later engulfment by autophagosomes (PubMed:17123504, PubMed:18230723, PubMed:18443288, PubMed:18799731, PubMed:20194754, PubMed:23650379, PubMed:24192653, PubMed:24901221, PubMed:29497364). Regulates motility of damaged mitochondria by phosphorylating Miro which likely promotes its park-dependent degradation by the proteasome; in motor neurons, this inhibits mitochondrial intracellular anterograde transport along the axons which probably increases the chance of the mitochondria being eliminated in the soma (PubMed:22396657). The Pink1-park pathway is also involved in mitochondrial regeneration processes such as promoting mitochondrial biogenesis, activating localized mitochondrial repair, promoting selective turnover of mitochondrial proteins and initiating the mitochondrial import of endogenous proteins (PubMed:16672980, PubMed:20496123, PubMed:20869429, PubMed:23509287, PubMed:23650379, PubMed:24192653, PubMed:25565208, PubMed:29497364). Involved in mitochondrial biogenesis via the ubiquitination of transcriptional repressor Paris which leads to its subsequent proteasomal degradation and allows activation of the transcription factor srl (PubMed:23509287, PubMed:29497364, PubMed:32138754). Promotes localized mitochondrial repair by activating the translation of specific nuclear-encoded mitochondrial RNAs (nc-mtRNAs) on the mitochondrial surface, including several key electron transport chain component nc-mtRNAs (PubMed:23509287, PubMed:25565208).</text>
</comment>
<comment type="catalytic activity">
    <reaction evidence="13 19 26 29">
        <text>[E2 ubiquitin-conjugating enzyme]-S-ubiquitinyl-L-cysteine + [acceptor protein]-L-lysine = [E2 ubiquitin-conjugating enzyme]-L-cysteine + [acceptor protein]-N(6)-ubiquitinyl-L-lysine.</text>
        <dbReference type="EC" id="2.3.2.31"/>
    </reaction>
</comment>
<comment type="activity regulation">
    <text evidence="2 17 19 29 30 32">In the autoinhibited state the side chain of Phe-481 inserts into a hydrophobic groove in RING-0, occluding the ubiquitin acceptor site Cys-449, whereas the REP repressor element binds RING-1 and blocks its E2-binding site (By similarity). Activation of park requires 2 steps: (1) phosphorylation at Ser-94 by Pink1 and (2) binding to phosphorylated ubiquitin, leading to unlock repression of the catalytic Cys-449 by the RING-0 region via an allosteric mechanism and converting park to its fully-active form (PubMed:18957282, PubMed:20194754, PubMed:24901221, PubMed:25474007, PubMed:27906179). According to another report, phosphorylation at Ser-94 by Pink1 is not essential for activation and only binding to phosphorylated ubiquitin is essential to unlock repression (By similarity).</text>
</comment>
<comment type="pathway">
    <text evidence="13 19 26 29">Protein modification; protein ubiquitination.</text>
</comment>
<comment type="subunit">
    <text evidence="13 18 19 28 37">Forms an E3 ubiquitin ligase complex with E2 ubiquitin-conjugating enzymes (PubMed:17456438). Interacts with Pink1 (PubMed:19048081). Interacts with Marf (PubMed:20194754, PubMed:24898855). Interacts with Paris (PubMed:32138754). Interacts with septins Septin1 and pnut (PubMed:17456438).</text>
</comment>
<comment type="interaction">
    <interactant intactId="EBI-131530">
        <id>Q7KTX7</id>
    </interactant>
    <interactant intactId="EBI-83262">
        <id>Q7YU24</id>
        <label>Marf</label>
    </interactant>
    <organismsDiffer>false</organismsDiffer>
    <experiments>2</experiments>
</comment>
<comment type="subcellular location">
    <subcellularLocation>
        <location evidence="17 19 32">Mitochondrion</location>
    </subcellularLocation>
    <subcellularLocation>
        <location evidence="19 22">Cytoplasm</location>
        <location evidence="19 22">Cytosol</location>
    </subcellularLocation>
    <text evidence="17 32">Translocates from the cytosol to dysfunctional mitochondria that have lost their mitochondrial membrane potential; recruitment to mitochondria is Pink1-dependent.</text>
</comment>
<comment type="tissue specificity">
    <text evidence="7 9 22">In oocytes, accumulates in early egg chambers where it is enriched until stages 9-10, localizing mainly to the posterior pole and anterior margin (at protein level) (PubMed:20869429). After stage 10 it is no longer detected in the oocyte (at protein level) (PubMed:20869429). In embryos, ubiquitously expressed in the early stages (stages 2 to 5) (at protein level) (PubMed:14646593). Expression levels decrease at later stages and becomes restricted to the brain and nerve cord from stage 9 (at protein level) (PubMed:14646593). Relatively higher levels of expression in the head compared to the body (PubMed:16002472). Enriched in the dorsomedial (DM) dopaminergic neurons (PubMed:16002472).</text>
</comment>
<comment type="developmental stage">
    <text evidence="6 7 8 9">Expressed throughout development (PubMed:12642658, PubMed:14646593, PubMed:15073152, PubMed:16002472). Highest levels of expression in adults and early embryos (PubMed:14646593, PubMed:15073152). First detected in 0-2 hour embryos, likely due to a maternal contribution as it is not detected during the rest of embryogenesis (PubMed:15073152). Expressed in third instar larvae, throughout pupal development and in adults (PubMed:15073152).</text>
</comment>
<comment type="domain">
    <text evidence="13">The RING-type 1 zinc finger domain is required for ubiquitination activity.</text>
</comment>
<comment type="domain">
    <text evidence="13 26">Members of the RBR family are atypical E3 ligases (PubMed:17456438, PubMed:23770917). They interact with E2 conjugating enzymes and function like HECT-type E3 enzymes: they bind E2s via the first RING domain, but require an obligate trans-thiolation step during the ubiquitin transfer, requiring a conserved cysteine residue in the second RING domain (PubMed:17456438, PubMed:23770917).</text>
</comment>
<comment type="PTM">
    <text evidence="13">Auto-ubiquitinates in an E2-dependent manner leading to its own degradation.</text>
</comment>
<comment type="PTM">
    <text evidence="17 29 30 32">Phosphorylated (PubMed:18957282, PubMed:24901221, PubMed:25474007, PubMed:27906179). Activation requires phosphorylation at Ser-94 by Pink1 and binding to Pink1-phosphorylated polyubiquitin chains (PubMed:18957282, PubMed:24901221, PubMed:25474007, PubMed:27906179). Phosphorylation at Thr-187 by Pink1 is also important for mitochondrial localization (PubMed:18957282).</text>
</comment>
<comment type="disruption phenotype">
    <text evidence="8 9 10 12 16 17 20 24 27 29 33 34 37">Pupal lethal; large percentage fail to enclose (PubMed:15073152). Escapers that develop into adults display various phenotypes that appear to be the result of mitochondrial abnormalities and/or mitochondrial dysfunction (PubMed:16672980, PubMed:23509287, PubMed:24192653, PubMed:29497364). In various tissues including the indirect flight muscles (IFM), thoracic muscles, sperm, cardiomyocytes and neurons such as the dopaminergic (DA) neurons, mitochondria display abnormalities such as swelling, loss of cristae, fragmentation, aggregation and/or mitochondrial disorganization, and they are dysfunctional resulting in defects such as mitochondrial depolarization, increased reactive oxygen species (ROS) production, reduced ATP, decreased mitochondrial DNA and reduced mitochondrial protein levels (PubMed:15073152, PubMed:17123504, PubMed:18799731, PubMed:18957282, PubMed:20483372, PubMed:24192653, PubMed:24901221, PubMed:29497364). As a result adults are reduced in size, display reduced survival and decreased fertility (PubMed:15073152, PubMed:16672980, PubMed:17123504, PubMed:24192653, PubMed:24901221, PubMed:29497364). They also exhibit age-dependent and progressive degradation of the IFM and the DA neurons, especially in the protocerebral posterior lateral 1 (PPL1) cluster, which likely contribute to the observed locomotive defects, down-turned rigid wings and crushed thorax phenotypes (PubMed:15073152, PubMed:16002472, PubMed:18799731, PubMed:18957282, PubMed:24901221, PubMed:29497364). However, another report did not observe any age-dependent dopaminergic neuron loss within 21 days post-eclosion (PubMed:15073152). Also affects non-motor behaviors such as reduced three-hour memory performance and irregular circadian rhythms under constant darkness, likely as a result of the neurodegradation (PubMed:28435104). Double knockout of Pink1 and park display no increase in the severity of their phenotypes compared to single mutants (PubMed:16672980). However, expression of park in Pink1 mutants markedly rescues most of the Pink1 mutant phenotypes, whereas expression of Pink1 in park mutants fails to rescue the defective thorax and abnormal wing position (PubMed:16672980). Double knockdown with Paris, improves climbing performance defects and rescues decreased mRNA levels of srl, ewg and TFAM, observed in park mutants (PubMed:32138754).</text>
</comment>
<comment type="similarity">
    <text evidence="40">Belongs to the RBR family. Parkin subfamily.</text>
</comment>
<protein>
    <recommendedName>
        <fullName evidence="38">E3 ubiquitin-protein ligase parkin</fullName>
        <ecNumber evidence="13 19 26 29">2.3.2.31</ecNumber>
    </recommendedName>
</protein>
<accession>Q7KTX7</accession>
<accession>Q86CZ3</accession>
<accession>Q86LE7</accession>
<accession>Q95TI4</accession>
<sequence length="482" mass="54105">MSFIFKFIATFVRKMLELLQFGGKTLTHTLSIYVKTNTGKTLTVNLEPQWDIKNVKELVAPQLGLQPDDLKIIFAGKELSDATTIEQCDLGQQSVLHAIRLRPPVQRQKIQSATLEEEEPSLSDEASKPLNETLLDLQLESEERLNITDEERVRAKAHFFVHCSQCDKLCNGKLRVRCALCKGGAFTVHRDPECWDDVLKSRRIPGHCESLEVACVDNAAGDPPFAEFFFKCAEHVSGGEKDFAAPLNLIKNNIKNVPCLACTDVSDTVLVFPCASQHVTCIDCFRHYCRSRLGERQFMPHPDFGYTLPCPAGCEHSFIEEIHHFKLLTREEYDRYQRFATEEYVLQAGGVLCPQPGCGMGLLVEPDCRKVTCQNGCGYVFCRNCLQGYHIGECLPEGTGASATNSCEYTVDPNRAAEARWDEASNVTIKVSTKPCPKCRTPTERDGGCMHMVCTRAGCGFEWCWVCQTEWTRDCMGAHWFG</sequence>
<feature type="chain" id="PRO_0000452364" description="E3 ubiquitin-protein ligase parkin">
    <location>
        <begin position="1"/>
        <end position="482"/>
    </location>
</feature>
<feature type="domain" description="Ubiquitin-like" evidence="4">
    <location>
        <begin position="30"/>
        <end position="99"/>
    </location>
</feature>
<feature type="zinc finger region" description="RING-type 0; atypical" evidence="2">
    <location>
        <begin position="157"/>
        <end position="246"/>
    </location>
</feature>
<feature type="zinc finger region" description="RING-type 1" evidence="5">
    <location>
        <begin position="259"/>
        <end position="314"/>
    </location>
</feature>
<feature type="zinc finger region" description="IBR-type" evidence="5">
    <location>
        <begin position="334"/>
        <end position="394"/>
    </location>
</feature>
<feature type="zinc finger region" description="IBR-type" evidence="3">
    <location>
        <begin position="432"/>
        <end position="473"/>
    </location>
</feature>
<feature type="zinc finger region" description="RING-type 2; atypical" evidence="5 26">
    <location>
        <begin position="436"/>
        <end position="467"/>
    </location>
</feature>
<feature type="region of interest" description="TRIAD supradomain" evidence="5">
    <location>
        <begin position="255"/>
        <end position="482"/>
    </location>
</feature>
<feature type="active site" evidence="5 26 36">
    <location>
        <position position="449"/>
    </location>
</feature>
<feature type="binding site" evidence="1">
    <location>
        <position position="163"/>
    </location>
    <ligand>
        <name>Zn(2+)</name>
        <dbReference type="ChEBI" id="CHEBI:29105"/>
        <label>1</label>
    </ligand>
</feature>
<feature type="binding site" evidence="1">
    <location>
        <position position="166"/>
    </location>
    <ligand>
        <name>Zn(2+)</name>
        <dbReference type="ChEBI" id="CHEBI:29105"/>
        <label>1</label>
    </ligand>
</feature>
<feature type="binding site" evidence="1">
    <location>
        <position position="178"/>
    </location>
    <ligand>
        <name>Zn(2+)</name>
        <dbReference type="ChEBI" id="CHEBI:29105"/>
        <label>2</label>
    </ligand>
</feature>
<feature type="binding site" evidence="1">
    <location>
        <position position="181"/>
    </location>
    <ligand>
        <name>Zn(2+)</name>
        <dbReference type="ChEBI" id="CHEBI:29105"/>
        <label>2</label>
    </ligand>
</feature>
<feature type="binding site" evidence="1">
    <location>
        <position position="208"/>
    </location>
    <ligand>
        <name>Zn(2+)</name>
        <dbReference type="ChEBI" id="CHEBI:29105"/>
        <label>2</label>
    </ligand>
</feature>
<feature type="binding site" evidence="1">
    <location>
        <position position="232"/>
    </location>
    <ligand>
        <name>Zn(2+)</name>
        <dbReference type="ChEBI" id="CHEBI:29105"/>
        <label>1</label>
    </ligand>
</feature>
<feature type="binding site" evidence="1">
    <location>
        <position position="235"/>
    </location>
    <ligand>
        <name>Zn(2+)</name>
        <dbReference type="ChEBI" id="CHEBI:29105"/>
        <label>1</label>
    </ligand>
</feature>
<feature type="binding site" evidence="5">
    <location>
        <position position="259"/>
    </location>
    <ligand>
        <name>Zn(2+)</name>
        <dbReference type="ChEBI" id="CHEBI:29105"/>
        <label>3</label>
    </ligand>
</feature>
<feature type="binding site" evidence="5">
    <location>
        <position position="262"/>
    </location>
    <ligand>
        <name>Zn(2+)</name>
        <dbReference type="ChEBI" id="CHEBI:29105"/>
        <label>3</label>
    </ligand>
</feature>
<feature type="binding site" evidence="5">
    <location>
        <position position="274"/>
    </location>
    <ligand>
        <name>Zn(2+)</name>
        <dbReference type="ChEBI" id="CHEBI:29105"/>
        <label>4</label>
    </ligand>
</feature>
<feature type="binding site" evidence="5">
    <location>
        <position position="278"/>
    </location>
    <ligand>
        <name>Zn(2+)</name>
        <dbReference type="ChEBI" id="CHEBI:29105"/>
        <label>4</label>
    </ligand>
</feature>
<feature type="binding site" evidence="5">
    <location>
        <position position="281"/>
    </location>
    <ligand>
        <name>Zn(2+)</name>
        <dbReference type="ChEBI" id="CHEBI:29105"/>
        <label>3</label>
    </ligand>
</feature>
<feature type="binding site" evidence="5">
    <location>
        <position position="284"/>
    </location>
    <ligand>
        <name>Zn(2+)</name>
        <dbReference type="ChEBI" id="CHEBI:29105"/>
        <label>3</label>
    </ligand>
</feature>
<feature type="binding site" evidence="5">
    <location>
        <position position="310"/>
    </location>
    <ligand>
        <name>Zn(2+)</name>
        <dbReference type="ChEBI" id="CHEBI:29105"/>
        <label>4</label>
    </ligand>
</feature>
<feature type="binding site" evidence="5">
    <location>
        <position position="314"/>
    </location>
    <ligand>
        <name>Zn(2+)</name>
        <dbReference type="ChEBI" id="CHEBI:29105"/>
        <label>4</label>
    </ligand>
</feature>
<feature type="binding site" evidence="5 26 49">
    <location>
        <position position="353"/>
    </location>
    <ligand>
        <name>Zn(2+)</name>
        <dbReference type="ChEBI" id="CHEBI:29105"/>
        <label>5</label>
    </ligand>
</feature>
<feature type="binding site" evidence="5 26 49">
    <location>
        <position position="358"/>
    </location>
    <ligand>
        <name>Zn(2+)</name>
        <dbReference type="ChEBI" id="CHEBI:29105"/>
        <label>5</label>
    </ligand>
</feature>
<feature type="binding site" evidence="5 26 49">
    <location>
        <position position="373"/>
    </location>
    <ligand>
        <name>Zn(2+)</name>
        <dbReference type="ChEBI" id="CHEBI:29105"/>
        <label>5</label>
    </ligand>
</feature>
<feature type="binding site" evidence="5 26 49">
    <location>
        <position position="377"/>
    </location>
    <ligand>
        <name>Zn(2+)</name>
        <dbReference type="ChEBI" id="CHEBI:29105"/>
        <label>5</label>
    </ligand>
</feature>
<feature type="binding site" evidence="5 26 49">
    <location>
        <position position="382"/>
    </location>
    <ligand>
        <name>Zn(2+)</name>
        <dbReference type="ChEBI" id="CHEBI:29105"/>
        <label>6</label>
    </ligand>
</feature>
<feature type="binding site" evidence="5 26 49">
    <location>
        <position position="385"/>
    </location>
    <ligand>
        <name>Zn(2+)</name>
        <dbReference type="ChEBI" id="CHEBI:29105"/>
        <label>6</label>
    </ligand>
</feature>
<feature type="binding site" evidence="5 26 49">
    <location>
        <position position="390"/>
    </location>
    <ligand>
        <name>Zn(2+)</name>
        <dbReference type="ChEBI" id="CHEBI:29105"/>
        <label>6</label>
    </ligand>
</feature>
<feature type="binding site" evidence="5 26 49">
    <location>
        <position position="394"/>
    </location>
    <ligand>
        <name>Zn(2+)</name>
        <dbReference type="ChEBI" id="CHEBI:29105"/>
        <label>6</label>
    </ligand>
</feature>
<feature type="binding site" evidence="5 26 48 49">
    <location>
        <position position="436"/>
    </location>
    <ligand>
        <name>Zn(2+)</name>
        <dbReference type="ChEBI" id="CHEBI:29105"/>
        <label>7</label>
    </ligand>
</feature>
<feature type="binding site" evidence="5 26 48 49">
    <location>
        <position position="439"/>
    </location>
    <ligand>
        <name>Zn(2+)</name>
        <dbReference type="ChEBI" id="CHEBI:29105"/>
        <label>7</label>
    </ligand>
</feature>
<feature type="binding site" evidence="5 26 48 49">
    <location>
        <position position="454"/>
    </location>
    <ligand>
        <name>Zn(2+)</name>
        <dbReference type="ChEBI" id="CHEBI:29105"/>
        <label>7</label>
    </ligand>
</feature>
<feature type="binding site" evidence="5 26 48 49">
    <location>
        <position position="459"/>
    </location>
    <ligand>
        <name>Zn(2+)</name>
        <dbReference type="ChEBI" id="CHEBI:29105"/>
        <label>7</label>
    </ligand>
</feature>
<feature type="binding site" evidence="5 26 48 49">
    <location>
        <position position="464"/>
    </location>
    <ligand>
        <name>Zn(2+)</name>
        <dbReference type="ChEBI" id="CHEBI:29105"/>
        <label>8</label>
    </ligand>
</feature>
<feature type="binding site" evidence="5 26 48 49">
    <location>
        <position position="467"/>
    </location>
    <ligand>
        <name>Zn(2+)</name>
        <dbReference type="ChEBI" id="CHEBI:29105"/>
        <label>8</label>
    </ligand>
</feature>
<feature type="binding site" evidence="5 26 48 49">
    <location>
        <position position="475"/>
    </location>
    <ligand>
        <name>Zn(2+)</name>
        <dbReference type="ChEBI" id="CHEBI:29105"/>
        <label>8</label>
    </ligand>
</feature>
<feature type="binding site" evidence="5 26 48 49">
    <location>
        <position position="479"/>
    </location>
    <ligand>
        <name>Zn(2+)</name>
        <dbReference type="ChEBI" id="CHEBI:29105"/>
        <label>8</label>
    </ligand>
</feature>
<feature type="modified residue" description="Phosphoserine; by Pink1" evidence="29">
    <location>
        <position position="94"/>
    </location>
</feature>
<feature type="modified residue" description="Phosphothreonine; by Pink1" evidence="29">
    <location>
        <position position="187"/>
    </location>
</feature>
<feature type="mutagenesis site" description="Abolishes self-ubiquitination resulting in decreased E3 ligase activity." evidence="9 13">
    <original>K</original>
    <variation>P</variation>
    <location>
        <position position="71"/>
    </location>
</feature>
<feature type="mutagenesis site" description="Abolishes phosphorylation by Pink1 and reduces enzyme activity. Mitochondrial morphology and function is relatively normal however, expression in TH-neurons results in impaired flying ability, impaired dopamine release and an age-dependent loss of DA neurons, spherical clustering of mitochondria in DA neurons and disturbed mitochondrial transport. Able to rescue all mitochondrial and behavioral defects caused by the loss of Pink1. Partially rescues mitochondrial morphology and abnormal wing posture caused by loss of park. No effect on translocation to mitochondria." evidence="29 32">
    <original>S</original>
    <variation>A</variation>
    <location>
        <position position="94"/>
    </location>
</feature>
<feature type="mutagenesis site" description="Phosphomimetic mutant with increased enzyme activity. Lethal when ubiquitously expressed. Constitutive phosphorylation results in impaired motor activity and fragmented mitochondria, likely due to reduced levels of the outer mitochondrial membrane proteins Marf and Miro. Expression in TH-neurons results in impaired flying ability, impaired dopamine release and substantial loss of DA neurons in very young adults (5-day old), single large mitochondria in each DA neuronal cell and loss of mitochondrial transport. Able to rescue reduced adult survival caused by loss of Pink1." evidence="29">
    <original>S</original>
    <variation>G</variation>
    <location>
        <position position="94"/>
    </location>
</feature>
<feature type="mutagenesis site" description="Reduced mitochondrial localization in the presence of Pink1. Reduced rescue of mitochondrial defects when expressed in null mutants." evidence="17">
    <original>T</original>
    <variation>A</variation>
    <location>
        <position position="187"/>
    </location>
</feature>
<feature type="mutagenesis site" description="Loss of self-ubiquitination." evidence="13">
    <original>R</original>
    <variation>W</variation>
    <location>
        <position position="296"/>
    </location>
</feature>
<feature type="mutagenesis site" description="Loss of self-ubiquitination." evidence="13">
    <original>C</original>
    <variation>G</variation>
    <location>
        <position position="310"/>
    </location>
</feature>
<feature type="mutagenesis site" description="Fails to rescue mitochondrial abnormalities and increases apoptosis in null mutants." evidence="36">
    <original>T</original>
    <variation>N</variation>
    <location>
        <position position="433"/>
    </location>
</feature>
<feature type="mutagenesis site" description="Loss of monoubiquitination and polyubiquitination of porin." evidence="36">
    <original>C</original>
    <variation>S</variation>
    <location>
        <position position="449"/>
    </location>
</feature>
<feature type="sequence conflict" description="In Ref. 3; AAL13983." evidence="40" ref="3">
    <original>I</original>
    <variation>F</variation>
    <location>
        <position position="254"/>
    </location>
</feature>
<feature type="strand" evidence="51">
    <location>
        <begin position="383"/>
        <end position="389"/>
    </location>
</feature>
<feature type="strand" evidence="50">
    <location>
        <begin position="432"/>
        <end position="435"/>
    </location>
</feature>
<feature type="turn" evidence="50">
    <location>
        <begin position="437"/>
        <end position="439"/>
    </location>
</feature>
<feature type="strand" evidence="50">
    <location>
        <begin position="442"/>
        <end position="444"/>
    </location>
</feature>
<feature type="strand" evidence="50">
    <location>
        <begin position="447"/>
        <end position="450"/>
    </location>
</feature>
<feature type="strand" evidence="52">
    <location>
        <begin position="451"/>
        <end position="453"/>
    </location>
</feature>
<feature type="turn" evidence="52">
    <location>
        <begin position="457"/>
        <end position="459"/>
    </location>
</feature>
<feature type="strand" evidence="52">
    <location>
        <begin position="462"/>
        <end position="464"/>
    </location>
</feature>
<feature type="strand" evidence="50">
    <location>
        <begin position="467"/>
        <end position="470"/>
    </location>
</feature>
<feature type="strand" evidence="50">
    <location>
        <begin position="473"/>
        <end position="475"/>
    </location>
</feature>
<feature type="turn" evidence="50">
    <location>
        <begin position="476"/>
        <end position="478"/>
    </location>
</feature>
<feature type="strand" evidence="50">
    <location>
        <begin position="479"/>
        <end position="481"/>
    </location>
</feature>
<name>PRKN_DROME</name>
<keyword id="KW-0002">3D-structure</keyword>
<keyword id="KW-0072">Autophagy</keyword>
<keyword id="KW-0963">Cytoplasm</keyword>
<keyword id="KW-0479">Metal-binding</keyword>
<keyword id="KW-0496">Mitochondrion</keyword>
<keyword id="KW-0597">Phosphoprotein</keyword>
<keyword id="KW-1185">Reference proteome</keyword>
<keyword id="KW-0677">Repeat</keyword>
<keyword id="KW-0808">Transferase</keyword>
<keyword id="KW-0832">Ubl conjugation</keyword>
<keyword id="KW-0833">Ubl conjugation pathway</keyword>
<keyword id="KW-0862">Zinc</keyword>
<keyword id="KW-0863">Zinc-finger</keyword>
<gene>
    <name evidence="39 46" type="primary">park</name>
    <name evidence="38" type="synonym">parkin</name>
    <name evidence="46" type="ORF">CG10523</name>
</gene>
<reference evidence="47" key="1">
    <citation type="journal article" date="2000" name="Science">
        <title>The genome sequence of Drosophila melanogaster.</title>
        <authorList>
            <person name="Adams M.D."/>
            <person name="Celniker S.E."/>
            <person name="Holt R.A."/>
            <person name="Evans C.A."/>
            <person name="Gocayne J.D."/>
            <person name="Amanatides P.G."/>
            <person name="Scherer S.E."/>
            <person name="Li P.W."/>
            <person name="Hoskins R.A."/>
            <person name="Galle R.F."/>
            <person name="George R.A."/>
            <person name="Lewis S.E."/>
            <person name="Richards S."/>
            <person name="Ashburner M."/>
            <person name="Henderson S.N."/>
            <person name="Sutton G.G."/>
            <person name="Wortman J.R."/>
            <person name="Yandell M.D."/>
            <person name="Zhang Q."/>
            <person name="Chen L.X."/>
            <person name="Brandon R.C."/>
            <person name="Rogers Y.-H.C."/>
            <person name="Blazej R.G."/>
            <person name="Champe M."/>
            <person name="Pfeiffer B.D."/>
            <person name="Wan K.H."/>
            <person name="Doyle C."/>
            <person name="Baxter E.G."/>
            <person name="Helt G."/>
            <person name="Nelson C.R."/>
            <person name="Miklos G.L.G."/>
            <person name="Abril J.F."/>
            <person name="Agbayani A."/>
            <person name="An H.-J."/>
            <person name="Andrews-Pfannkoch C."/>
            <person name="Baldwin D."/>
            <person name="Ballew R.M."/>
            <person name="Basu A."/>
            <person name="Baxendale J."/>
            <person name="Bayraktaroglu L."/>
            <person name="Beasley E.M."/>
            <person name="Beeson K.Y."/>
            <person name="Benos P.V."/>
            <person name="Berman B.P."/>
            <person name="Bhandari D."/>
            <person name="Bolshakov S."/>
            <person name="Borkova D."/>
            <person name="Botchan M.R."/>
            <person name="Bouck J."/>
            <person name="Brokstein P."/>
            <person name="Brottier P."/>
            <person name="Burtis K.C."/>
            <person name="Busam D.A."/>
            <person name="Butler H."/>
            <person name="Cadieu E."/>
            <person name="Center A."/>
            <person name="Chandra I."/>
            <person name="Cherry J.M."/>
            <person name="Cawley S."/>
            <person name="Dahlke C."/>
            <person name="Davenport L.B."/>
            <person name="Davies P."/>
            <person name="de Pablos B."/>
            <person name="Delcher A."/>
            <person name="Deng Z."/>
            <person name="Mays A.D."/>
            <person name="Dew I."/>
            <person name="Dietz S.M."/>
            <person name="Dodson K."/>
            <person name="Doup L.E."/>
            <person name="Downes M."/>
            <person name="Dugan-Rocha S."/>
            <person name="Dunkov B.C."/>
            <person name="Dunn P."/>
            <person name="Durbin K.J."/>
            <person name="Evangelista C.C."/>
            <person name="Ferraz C."/>
            <person name="Ferriera S."/>
            <person name="Fleischmann W."/>
            <person name="Fosler C."/>
            <person name="Gabrielian A.E."/>
            <person name="Garg N.S."/>
            <person name="Gelbart W.M."/>
            <person name="Glasser K."/>
            <person name="Glodek A."/>
            <person name="Gong F."/>
            <person name="Gorrell J.H."/>
            <person name="Gu Z."/>
            <person name="Guan P."/>
            <person name="Harris M."/>
            <person name="Harris N.L."/>
            <person name="Harvey D.A."/>
            <person name="Heiman T.J."/>
            <person name="Hernandez J.R."/>
            <person name="Houck J."/>
            <person name="Hostin D."/>
            <person name="Houston K.A."/>
            <person name="Howland T.J."/>
            <person name="Wei M.-H."/>
            <person name="Ibegwam C."/>
            <person name="Jalali M."/>
            <person name="Kalush F."/>
            <person name="Karpen G.H."/>
            <person name="Ke Z."/>
            <person name="Kennison J.A."/>
            <person name="Ketchum K.A."/>
            <person name="Kimmel B.E."/>
            <person name="Kodira C.D."/>
            <person name="Kraft C.L."/>
            <person name="Kravitz S."/>
            <person name="Kulp D."/>
            <person name="Lai Z."/>
            <person name="Lasko P."/>
            <person name="Lei Y."/>
            <person name="Levitsky A.A."/>
            <person name="Li J.H."/>
            <person name="Li Z."/>
            <person name="Liang Y."/>
            <person name="Lin X."/>
            <person name="Liu X."/>
            <person name="Mattei B."/>
            <person name="McIntosh T.C."/>
            <person name="McLeod M.P."/>
            <person name="McPherson D."/>
            <person name="Merkulov G."/>
            <person name="Milshina N.V."/>
            <person name="Mobarry C."/>
            <person name="Morris J."/>
            <person name="Moshrefi A."/>
            <person name="Mount S.M."/>
            <person name="Moy M."/>
            <person name="Murphy B."/>
            <person name="Murphy L."/>
            <person name="Muzny D.M."/>
            <person name="Nelson D.L."/>
            <person name="Nelson D.R."/>
            <person name="Nelson K.A."/>
            <person name="Nixon K."/>
            <person name="Nusskern D.R."/>
            <person name="Pacleb J.M."/>
            <person name="Palazzolo M."/>
            <person name="Pittman G.S."/>
            <person name="Pan S."/>
            <person name="Pollard J."/>
            <person name="Puri V."/>
            <person name="Reese M.G."/>
            <person name="Reinert K."/>
            <person name="Remington K."/>
            <person name="Saunders R.D.C."/>
            <person name="Scheeler F."/>
            <person name="Shen H."/>
            <person name="Shue B.C."/>
            <person name="Siden-Kiamos I."/>
            <person name="Simpson M."/>
            <person name="Skupski M.P."/>
            <person name="Smith T.J."/>
            <person name="Spier E."/>
            <person name="Spradling A.C."/>
            <person name="Stapleton M."/>
            <person name="Strong R."/>
            <person name="Sun E."/>
            <person name="Svirskas R."/>
            <person name="Tector C."/>
            <person name="Turner R."/>
            <person name="Venter E."/>
            <person name="Wang A.H."/>
            <person name="Wang X."/>
            <person name="Wang Z.-Y."/>
            <person name="Wassarman D.A."/>
            <person name="Weinstock G.M."/>
            <person name="Weissenbach J."/>
            <person name="Williams S.M."/>
            <person name="Woodage T."/>
            <person name="Worley K.C."/>
            <person name="Wu D."/>
            <person name="Yang S."/>
            <person name="Yao Q.A."/>
            <person name="Ye J."/>
            <person name="Yeh R.-F."/>
            <person name="Zaveri J.S."/>
            <person name="Zhan M."/>
            <person name="Zhang G."/>
            <person name="Zhao Q."/>
            <person name="Zheng L."/>
            <person name="Zheng X.H."/>
            <person name="Zhong F.N."/>
            <person name="Zhong W."/>
            <person name="Zhou X."/>
            <person name="Zhu S.C."/>
            <person name="Zhu X."/>
            <person name="Smith H.O."/>
            <person name="Gibbs R.A."/>
            <person name="Myers E.W."/>
            <person name="Rubin G.M."/>
            <person name="Venter J.C."/>
        </authorList>
    </citation>
    <scope>NUCLEOTIDE SEQUENCE [LARGE SCALE GENOMIC DNA]</scope>
    <source>
        <strain evidence="47">Berkeley</strain>
    </source>
</reference>
<reference evidence="47" key="2">
    <citation type="journal article" date="2002" name="Genome Biol.">
        <title>Annotation of the Drosophila melanogaster euchromatic genome: a systematic review.</title>
        <authorList>
            <person name="Misra S."/>
            <person name="Crosby M.A."/>
            <person name="Mungall C.J."/>
            <person name="Matthews B.B."/>
            <person name="Campbell K.S."/>
            <person name="Hradecky P."/>
            <person name="Huang Y."/>
            <person name="Kaminker J.S."/>
            <person name="Millburn G.H."/>
            <person name="Prochnik S.E."/>
            <person name="Smith C.D."/>
            <person name="Tupy J.L."/>
            <person name="Whitfield E.J."/>
            <person name="Bayraktaroglu L."/>
            <person name="Berman B.P."/>
            <person name="Bettencourt B.R."/>
            <person name="Celniker S.E."/>
            <person name="de Grey A.D.N.J."/>
            <person name="Drysdale R.A."/>
            <person name="Harris N.L."/>
            <person name="Richter J."/>
            <person name="Russo S."/>
            <person name="Schroeder A.J."/>
            <person name="Shu S.Q."/>
            <person name="Stapleton M."/>
            <person name="Yamada C."/>
            <person name="Ashburner M."/>
            <person name="Gelbart W.M."/>
            <person name="Rubin G.M."/>
            <person name="Lewis S.E."/>
        </authorList>
    </citation>
    <scope>GENOME REANNOTATION</scope>
    <source>
        <strain evidence="47">Berkeley</strain>
    </source>
</reference>
<reference evidence="41" key="3">
    <citation type="journal article" date="2002" name="Genome Biol.">
        <title>A Drosophila full-length cDNA resource.</title>
        <authorList>
            <person name="Stapleton M."/>
            <person name="Carlson J.W."/>
            <person name="Brokstein P."/>
            <person name="Yu C."/>
            <person name="Champe M."/>
            <person name="George R.A."/>
            <person name="Guarin H."/>
            <person name="Kronmiller B."/>
            <person name="Pacleb J.M."/>
            <person name="Park S."/>
            <person name="Wan K.H."/>
            <person name="Rubin G.M."/>
            <person name="Celniker S.E."/>
        </authorList>
    </citation>
    <scope>NUCLEOTIDE SEQUENCE [LARGE SCALE MRNA]</scope>
    <source>
        <strain evidence="41">Berkeley</strain>
        <tissue evidence="41">Embryo</tissue>
    </source>
</reference>
<reference evidence="45" key="4">
    <citation type="submission" date="2008-09" db="EMBL/GenBank/DDBJ databases">
        <authorList>
            <person name="Carlson J."/>
            <person name="Booth B."/>
            <person name="Frise E."/>
            <person name="Park S."/>
            <person name="Wan K."/>
            <person name="Yu C."/>
            <person name="Celniker S."/>
        </authorList>
    </citation>
    <scope>NUCLEOTIDE SEQUENCE [LARGE SCALE MRNA]</scope>
    <source>
        <strain evidence="45">Berkeley</strain>
    </source>
</reference>
<reference evidence="42 43 44" key="5">
    <citation type="journal article" date="2003" name="Exp. Mol. Med.">
        <title>Genomic organization and expression of parkin in Drosophila melanogaster.</title>
        <authorList>
            <person name="Bae Y.J."/>
            <person name="Park K.S."/>
            <person name="Kang S.J."/>
        </authorList>
    </citation>
    <scope>NUCLEOTIDE SEQUENCE [MRNA]</scope>
    <scope>TISSUE SPECIFICITY</scope>
    <scope>DEVELOPMENTAL STAGE</scope>
</reference>
<reference evidence="40" key="6">
    <citation type="journal article" date="2003" name="Proc. Natl. Acad. Sci. U.S.A.">
        <title>Mitochondrial pathology and apoptotic muscle degeneration in Drosophila parkin mutants.</title>
        <authorList>
            <person name="Greene J.C."/>
            <person name="Whitworth A.J."/>
            <person name="Kuo I."/>
            <person name="Andrews L.A."/>
            <person name="Feany M.B."/>
            <person name="Pallanck L.J."/>
        </authorList>
    </citation>
    <scope>FUNCTION</scope>
    <scope>DEVELOPMENTAL STAGE</scope>
</reference>
<reference evidence="40" key="7">
    <citation type="journal article" date="2004" name="Development">
        <title>Drosophila parkin mutants have decreased mass and cell size and increased sensitivity to oxygen radical stress.</title>
        <authorList>
            <person name="Pesah Y."/>
            <person name="Pham T."/>
            <person name="Burgess H."/>
            <person name="Middlebrooks B."/>
            <person name="Verstreken P."/>
            <person name="Zhou Y."/>
            <person name="Harding M."/>
            <person name="Bellen H."/>
            <person name="Mardon G."/>
        </authorList>
    </citation>
    <scope>FUNCTION</scope>
    <scope>DEVELOPMENTAL STAGE</scope>
    <scope>DISRUPTION PHENOTYPE</scope>
</reference>
<reference evidence="40" key="8">
    <citation type="journal article" date="2005" name="Proc. Natl. Acad. Sci. U.S.A.">
        <title>Parkin negatively regulates JNK pathway in the dopaminergic neurons of Drosophila.</title>
        <authorList>
            <person name="Cha G.H."/>
            <person name="Kim S."/>
            <person name="Park J."/>
            <person name="Lee E."/>
            <person name="Kim M."/>
            <person name="Lee S.B."/>
            <person name="Kim J.M."/>
            <person name="Chung J."/>
            <person name="Cho K.S."/>
        </authorList>
    </citation>
    <scope>FUNCTION</scope>
    <scope>TISSUE SPECIFICITY</scope>
    <scope>DEVELOPMENTAL STAGE</scope>
    <scope>DISRUPTION PHENOTYPE</scope>
    <scope>MUTAGENESIS OF LYS-71</scope>
</reference>
<reference evidence="40" key="9">
    <citation type="journal article" date="2006" name="Nature">
        <title>Mitochondrial dysfunction in Drosophila PINK1 mutants is complemented by parkin.</title>
        <authorList>
            <person name="Park J."/>
            <person name="Lee S.B."/>
            <person name="Lee S."/>
            <person name="Kim Y."/>
            <person name="Song S."/>
            <person name="Kim S."/>
            <person name="Bae E."/>
            <person name="Kim J."/>
            <person name="Shong M."/>
            <person name="Kim J.M."/>
            <person name="Chung J."/>
        </authorList>
    </citation>
    <scope>FUNCTION</scope>
    <scope>DISRUPTION PHENOTYPE</scope>
</reference>
<reference evidence="40" key="10">
    <citation type="journal article" date="2006" name="Nature">
        <title>Drosophila pink1 is required for mitochondrial function and interacts genetically with parkin.</title>
        <authorList>
            <person name="Clark I.E."/>
            <person name="Dodson M.W."/>
            <person name="Jiang C."/>
            <person name="Cao J.H."/>
            <person name="Huh J.R."/>
            <person name="Seol J.H."/>
            <person name="Yoo S.J."/>
            <person name="Hay B.A."/>
            <person name="Guo M."/>
        </authorList>
    </citation>
    <scope>FUNCTION</scope>
</reference>
<reference evidence="40" key="11">
    <citation type="journal article" date="2007" name="Dev. Biol.">
        <title>The Drosophila parkin homologue is required for normal mitochondrial dynamics during spermiogenesis.</title>
        <authorList>
            <person name="Riparbelli M.G."/>
            <person name="Callaini G."/>
        </authorList>
    </citation>
    <scope>FUNCTION</scope>
    <scope>DISRUPTION PHENOTYPE</scope>
</reference>
<reference evidence="40" key="12">
    <citation type="journal article" date="2007" name="Insect Biochem. Mol. Biol.">
        <title>Drosophila melanogaster Parkin ubiquitinates peanut and septin1 as an E3 ubiquitin-protein ligase.</title>
        <authorList>
            <person name="Bae Y.J."/>
            <person name="Kang S.J."/>
            <person name="Park K.S."/>
        </authorList>
    </citation>
    <scope>FUNCTION</scope>
    <scope>CATALYTIC ACTIVITY</scope>
    <scope>INTERACTION WITH SEPTIN1 AND PNUT</scope>
    <scope>DOMAIN</scope>
    <scope>UBIQUITINATION</scope>
    <scope>MUTAGENESIS OF 1-MET--GLU-227; LYS-71; ARG-296; CYS-310; 328-LEU--GLU-482 AND 433-THR--GLU-482</scope>
</reference>
<reference evidence="40" key="13">
    <citation type="journal article" date="2008" name="Biochem. Biophys. Res. Commun.">
        <title>PINK1 controls mitochondrial localization of Parkin through direct phosphorylation.</title>
        <authorList>
            <person name="Kim Y."/>
            <person name="Park J."/>
            <person name="Kim S."/>
            <person name="Song S."/>
            <person name="Kwon S.K."/>
            <person name="Lee S.H."/>
            <person name="Kitada T."/>
            <person name="Kim J.M."/>
            <person name="Chung J."/>
        </authorList>
    </citation>
    <scope>FUNCTION</scope>
    <scope>ACTIVITY REGULATION</scope>
    <scope>PATHWAY</scope>
    <scope>SUBCELLULAR LOCATION</scope>
    <scope>DISRUPTION PHENOTYPE</scope>
    <scope>PHOSPHORYLATION AT SER-94 AND THR-187</scope>
    <scope>MUTAGENESIS OF THR-187</scope>
</reference>
<reference evidence="40" key="14">
    <citation type="journal article" date="2008" name="Dis. Model. Mech.">
        <title>Rhomboid-7 and HtrA2/Omi act in a common pathway with the Parkinson's disease factors Pink1 and Parkin.</title>
        <authorList>
            <person name="Whitworth A.J."/>
            <person name="Lee J.R."/>
            <person name="Ho V.M."/>
            <person name="Flick R."/>
            <person name="Chowdhury R."/>
            <person name="McQuibban G.A."/>
        </authorList>
    </citation>
    <scope>INTERACTION WITH PINK1</scope>
</reference>
<reference evidence="40" key="15">
    <citation type="journal article" date="2008" name="Proc. Natl. Acad. Sci. U.S.A.">
        <title>The Parkinson's disease genes pink1 and parkin promote mitochondrial fission and/or inhibit fusion in Drosophila.</title>
        <authorList>
            <person name="Deng H."/>
            <person name="Dodson M.W."/>
            <person name="Huang H."/>
            <person name="Guo M."/>
        </authorList>
    </citation>
    <scope>FUNCTION</scope>
    <scope>DISRUPTION PHENOTYPE</scope>
</reference>
<reference evidence="40" key="16">
    <citation type="journal article" date="2008" name="Proc. Natl. Acad. Sci. U.S.A.">
        <title>The PINK1/Parkin pathway regulates mitochondrial morphology.</title>
        <authorList>
            <person name="Poole A.C."/>
            <person name="Thomas R.E."/>
            <person name="Andrews L.A."/>
            <person name="McBride H.M."/>
            <person name="Whitworth A.J."/>
            <person name="Pallanck L.J."/>
        </authorList>
    </citation>
    <scope>FUNCTION</scope>
</reference>
<reference evidence="40" key="17">
    <citation type="journal article" date="2008" name="Proc. Natl. Acad. Sci. U.S.A.">
        <title>Pink1 regulates mitochondrial dynamics through interaction with the fission/fusion machinery.</title>
        <authorList>
            <person name="Yang Y."/>
            <person name="Ouyang Y."/>
            <person name="Yang L."/>
            <person name="Beal M.F."/>
            <person name="McQuibban A."/>
            <person name="Vogel H."/>
            <person name="Lu B."/>
        </authorList>
    </citation>
    <scope>FUNCTION</scope>
</reference>
<reference evidence="40" key="18">
    <citation type="journal article" date="2008" name="Proc. Natl. Acad. Sci. U.S.A.">
        <authorList>
            <person name="Yang Y."/>
            <person name="Ouyang Y."/>
            <person name="Yang L."/>
            <person name="Beal M.F."/>
            <person name="McQuibban A."/>
            <person name="Vogel H."/>
            <person name="Lu B."/>
        </authorList>
    </citation>
    <scope>ERRATUM OF PUBMED:18443288</scope>
</reference>
<reference evidence="40" key="19">
    <citation type="journal article" date="2010" name="Mol. Cells">
        <title>Parkin suppresses c-Jun N-terminal kinase-induced cell death via transcriptional regulation in Drosophila.</title>
        <authorList>
            <person name="Hwang S."/>
            <person name="Kim D."/>
            <person name="Choi G."/>
            <person name="An S.W."/>
            <person name="Hong Y.K."/>
            <person name="Suh Y.S."/>
            <person name="Lee M.J."/>
            <person name="Cho K.S."/>
        </authorList>
    </citation>
    <scope>FUNCTION</scope>
</reference>
<reference evidence="40" key="20">
    <citation type="journal article" date="2010" name="Neurobiol. Dis.">
        <title>Extended lifespan of Drosophila parkin mutants through sequestration of redox-active metals and enhancement of anti-oxidative pathways.</title>
        <authorList>
            <person name="Saini N."/>
            <person name="Oelhafen S."/>
            <person name="Hua H."/>
            <person name="Georgiev O."/>
            <person name="Schaffner W."/>
            <person name="Bueeler H."/>
        </authorList>
    </citation>
    <scope>FUNCTION</scope>
    <scope>DISRUPTION PHENOTYPE</scope>
</reference>
<reference evidence="40" key="21">
    <citation type="journal article" date="2010" name="Proc. Natl. Acad. Sci. U.S.A.">
        <title>Drosophila parkin requires PINK1 for mitochondrial translocation and ubiquitinates mitofusin.</title>
        <authorList>
            <person name="Ziviani E."/>
            <person name="Tao R.N."/>
            <person name="Whitworth A.J."/>
        </authorList>
    </citation>
    <scope>FUNCTION</scope>
    <scope>CATALYTIC ACTIVITY</scope>
    <scope>ACTIVITY REGULATION</scope>
    <scope>PATHWAY</scope>
    <scope>INTERACTION WITH MARF</scope>
    <scope>SUBCELLULAR LOCATION</scope>
</reference>
<reference evidence="40" key="22">
    <citation type="journal article" date="2011" name="Gene">
        <title>Diminution of eIF4E activity suppresses parkin mutant phenotypes.</title>
        <authorList>
            <person name="Ottone C."/>
            <person name="Galasso A."/>
            <person name="Gemei M."/>
            <person name="Pisa V."/>
            <person name="Gigliotti S."/>
            <person name="Piccioni F."/>
            <person name="Graziani F."/>
            <person name="Verrotti di Pianella A."/>
        </authorList>
    </citation>
    <scope>FUNCTION</scope>
    <scope>SUBCELLULAR LOCATION</scope>
    <scope>TISSUE SPECIFICITY</scope>
</reference>
<reference evidence="40" key="23">
    <citation type="journal article" date="2012" name="PLoS Genet.">
        <title>Parkinson's disease-associated kinase PINK1 regulates Miro protein level and axonal transport of mitochondria.</title>
        <authorList>
            <person name="Liu S."/>
            <person name="Sawada T."/>
            <person name="Lee S."/>
            <person name="Yu W."/>
            <person name="Silverio G."/>
            <person name="Alapatt P."/>
            <person name="Millan I."/>
            <person name="Shen A."/>
            <person name="Saxton W."/>
            <person name="Kanao T."/>
            <person name="Takahashi R."/>
            <person name="Hattori N."/>
            <person name="Imai Y."/>
            <person name="Lu B."/>
        </authorList>
    </citation>
    <scope>FUNCTION</scope>
</reference>
<reference evidence="40" key="24">
    <citation type="journal article" date="2013" name="Proc. Natl. Acad. Sci. U.S.A.">
        <title>The PINK1-Parkin pathway promotes both mitophagy and selective respiratory chain turnover in vivo.</title>
        <authorList>
            <person name="Vincow E.S."/>
            <person name="Merrihew G."/>
            <person name="Thomas R.E."/>
            <person name="Shulman N.J."/>
            <person name="Beyer R.P."/>
            <person name="MacCoss M.J."/>
            <person name="Pallanck L.J."/>
        </authorList>
    </citation>
    <scope>FUNCTION</scope>
    <scope>DISRUPTION PHENOTYPE</scope>
</reference>
<reference evidence="40" key="25">
    <citation type="journal article" date="2013" name="Proc. Natl. Acad. Sci. U.S.A.">
        <title>Parkin overexpression during aging reduces proteotoxicity, alters mitochondrial dynamics, and extends lifespan.</title>
        <authorList>
            <person name="Rana A."/>
            <person name="Rera M."/>
            <person name="Walker D.W."/>
        </authorList>
    </citation>
    <scope>FUNCTION</scope>
</reference>
<reference evidence="40" key="26">
    <citation type="journal article" date="2014" name="Circ. Res.">
        <title>Mitochondrial contagion induced by Parkin deficiency in Drosophila hearts and its containment by suppressing mitofusin.</title>
        <authorList>
            <person name="Bhandari P."/>
            <person name="Song M."/>
            <person name="Chen Y."/>
            <person name="Burelle Y."/>
            <person name="Dorn G.W. II"/>
        </authorList>
    </citation>
    <scope>FUNCTION</scope>
    <scope>DISRUPTION PHENOTYPE</scope>
</reference>
<reference evidence="40" key="27">
    <citation type="journal article" date="2014" name="Elife">
        <title>MUL1 acts in parallel to the PINK1/parkin pathway in regulating mitofusin and compensates for loss of PINK1/parkin.</title>
        <authorList>
            <person name="Yun J."/>
            <person name="Puri R."/>
            <person name="Yang H."/>
            <person name="Lizzio M.A."/>
            <person name="Wu C."/>
            <person name="Sheng Z.H."/>
            <person name="Guo M."/>
        </authorList>
    </citation>
    <scope>INTERACTION WITH MARF</scope>
</reference>
<reference evidence="40" key="28">
    <citation type="journal article" date="2014" name="PLoS Genet.">
        <title>PINK1-mediated phosphorylation of Parkin boosts Parkin activity in Drosophila.</title>
        <authorList>
            <person name="Shiba-Fukushima K."/>
            <person name="Inoshita T."/>
            <person name="Hattori N."/>
            <person name="Imai Y."/>
        </authorList>
    </citation>
    <scope>FUNCTION</scope>
    <scope>CATALYTIC ACTIVITY</scope>
    <scope>ACTIVITY REGULATION</scope>
    <scope>PATHWAY</scope>
    <scope>DISRUPTION PHENOTYPE</scope>
    <scope>PHOSPHORYLATION AT SER-94</scope>
    <scope>MUTAGENESIS OF SER-94</scope>
</reference>
<reference evidence="40" key="29">
    <citation type="journal article" date="2014" name="PLoS Genet.">
        <title>Phosphorylation of mitochondrial polyubiquitin by PINK1 promotes Parkin mitochondrial tethering.</title>
        <authorList>
            <person name="Shiba-Fukushima K."/>
            <person name="Arano T."/>
            <person name="Matsumoto G."/>
            <person name="Inoshita T."/>
            <person name="Yoshida S."/>
            <person name="Ishihama Y."/>
            <person name="Ryu K.Y."/>
            <person name="Nukina N."/>
            <person name="Hattori N."/>
            <person name="Imai Y."/>
        </authorList>
    </citation>
    <scope>FUNCTION</scope>
    <scope>ACTIVITY REGULATION</scope>
    <scope>PHOSPHORYLATION AT SER-94</scope>
</reference>
<reference evidence="40" key="30">
    <citation type="journal article" date="2015" name="Cell Metab.">
        <title>PINK1 and Parkin control localized translation of respiratory chain component mRNAs on mitochondria outer membrane.</title>
        <authorList>
            <person name="Gehrke S."/>
            <person name="Wu Z."/>
            <person name="Klinkenberg M."/>
            <person name="Sun Y."/>
            <person name="Auburger G."/>
            <person name="Guo S."/>
            <person name="Lu B."/>
        </authorList>
    </citation>
    <scope>FUNCTION</scope>
</reference>
<reference evidence="40" key="31">
    <citation type="journal article" date="2016" name="Cell Death Dis.">
        <title>PINK1-dependent phosphorylation of PINK1 and Parkin is essential for mitochondrial quality control.</title>
        <authorList>
            <person name="Zhuang N."/>
            <person name="Li L."/>
            <person name="Chen S."/>
            <person name="Wang T."/>
        </authorList>
    </citation>
    <scope>FUNCTION</scope>
    <scope>ACTIVITY REGULATION</scope>
    <scope>SUBCELLULAR LOCATION</scope>
    <scope>PHOSPHORYLATION AT SER-94</scope>
    <scope>MUTAGENESIS OF SER-94</scope>
</reference>
<reference evidence="40" key="32">
    <citation type="journal article" date="2017" name="Neurobiol. Dis.">
        <title>Drosophila PINK1 and parkin loss-of-function mutants display a range of non-motor Parkinson's disease phenotypes.</title>
        <authorList>
            <person name="Julienne H."/>
            <person name="Buhl E."/>
            <person name="Leslie D.S."/>
            <person name="Hodge J.J.L."/>
        </authorList>
    </citation>
    <scope>FUNCTION</scope>
    <scope>DISRUPTION PHENOTYPE</scope>
</reference>
<reference evidence="40" key="33">
    <citation type="journal article" date="2018" name="Front. Cell. Neurosci.">
        <title>Vulnerable Parkin Loss-of-Function Drosophila Dopaminergic Neurons Have Advanced Mitochondrial Aging, Mitochondrial Network Loss and Transiently Reduced Autophagosome Recruitment.</title>
        <authorList>
            <person name="Cackovic J."/>
            <person name="Gutierrez-Luke S."/>
            <person name="Call G.B."/>
            <person name="Juba A."/>
            <person name="O'Brien S."/>
            <person name="Jun C.H."/>
            <person name="Buhlman L.M."/>
        </authorList>
    </citation>
    <scope>FUNCTION</scope>
    <scope>DISRUPTION PHENOTYPE</scope>
</reference>
<reference evidence="40" key="34">
    <citation type="journal article" date="2019" name="PLoS ONE">
        <title>Overexpression of pink1 or parkin in indirect flight muscles promotes mitochondrial proteostasis and extends lifespan in Drosophila melanogaster.</title>
        <authorList>
            <person name="Si H."/>
            <person name="Ma P."/>
            <person name="Liang Q."/>
            <person name="Yin Y."/>
            <person name="Wang P."/>
            <person name="Zhang Q."/>
            <person name="Wang S."/>
            <person name="Deng H."/>
        </authorList>
    </citation>
    <scope>FUNCTION</scope>
</reference>
<reference evidence="40" key="35">
    <citation type="journal article" date="2020" name="Mol. Neurodegener.">
        <title>PARIS induced defects in mitochondrial biogenesis drive dopamine neuron loss under conditions of parkin or PINK1 deficiency.</title>
        <authorList>
            <person name="Pirooznia S.K."/>
            <person name="Yuan C."/>
            <person name="Khan M.R."/>
            <person name="Karuppagounder S.S."/>
            <person name="Wang L."/>
            <person name="Xiong Y."/>
            <person name="Kang S.U."/>
            <person name="Lee Y."/>
            <person name="Dawson V.L."/>
            <person name="Dawson T.M."/>
        </authorList>
    </citation>
    <scope>FUNCTION</scope>
    <scope>INTERACTION WITH PARIS</scope>
    <scope>DISRUPTION PHENOTYPE</scope>
</reference>
<reference evidence="40" key="36">
    <citation type="journal article" date="2020" name="Proc. Natl. Acad. Sci. U.S.A.">
        <title>Decision between mitophagy and apoptosis by Parkin via VDAC1 ubiquitination.</title>
        <authorList>
            <person name="Ham S.J."/>
            <person name="Lee D."/>
            <person name="Yoo H."/>
            <person name="Jun K."/>
            <person name="Shin H."/>
            <person name="Chung J."/>
        </authorList>
    </citation>
    <scope>FUNCTION</scope>
    <scope>ACTIVE SITE</scope>
    <scope>MUTAGENESIS OF THR-433 AND CYS-449</scope>
</reference>
<reference evidence="48 49" key="37">
    <citation type="journal article" date="2013" name="Nat. Commun.">
        <title>A molecular explanation for the recessive nature of parkin-linked Parkinson's disease.</title>
        <authorList>
            <person name="Spratt D.E."/>
            <person name="Martinez-Torres R.J."/>
            <person name="Noh Y.J."/>
            <person name="Mercier P."/>
            <person name="Manczyk N."/>
            <person name="Barber K.R."/>
            <person name="Aguirre J.D."/>
            <person name="Burchell L."/>
            <person name="Purkiss A."/>
            <person name="Walden H."/>
            <person name="Shaw G.S."/>
        </authorList>
    </citation>
    <scope>STRUCTURE BY NMR OF 342-482 IN COMPLEX WITH ZINC</scope>
    <scope>FUNCTION</scope>
    <scope>CATALYTIC ACTIVITY</scope>
    <scope>PATHWAY</scope>
    <scope>DOMAIN</scope>
    <scope>ACTIVE SITE</scope>
</reference>
<organism evidence="47">
    <name type="scientific">Drosophila melanogaster</name>
    <name type="common">Fruit fly</name>
    <dbReference type="NCBI Taxonomy" id="7227"/>
    <lineage>
        <taxon>Eukaryota</taxon>
        <taxon>Metazoa</taxon>
        <taxon>Ecdysozoa</taxon>
        <taxon>Arthropoda</taxon>
        <taxon>Hexapoda</taxon>
        <taxon>Insecta</taxon>
        <taxon>Pterygota</taxon>
        <taxon>Neoptera</taxon>
        <taxon>Endopterygota</taxon>
        <taxon>Diptera</taxon>
        <taxon>Brachycera</taxon>
        <taxon>Muscomorpha</taxon>
        <taxon>Ephydroidea</taxon>
        <taxon>Drosophilidae</taxon>
        <taxon>Drosophila</taxon>
        <taxon>Sophophora</taxon>
    </lineage>
</organism>
<proteinExistence type="evidence at protein level"/>
<dbReference type="EC" id="2.3.2.31" evidence="13 19 26 29"/>
<dbReference type="EMBL" id="AF510072">
    <property type="protein sequence ID" value="AAM43930.1"/>
    <property type="molecule type" value="Genomic_DNA"/>
</dbReference>
<dbReference type="EMBL" id="AE014296">
    <property type="protein sequence ID" value="AAN12154.1"/>
    <property type="molecule type" value="Genomic_DNA"/>
</dbReference>
<dbReference type="EMBL" id="AE014296">
    <property type="protein sequence ID" value="AAN12155.1"/>
    <property type="molecule type" value="Genomic_DNA"/>
</dbReference>
<dbReference type="EMBL" id="AY058754">
    <property type="protein sequence ID" value="AAL13983.1"/>
    <property type="molecule type" value="mRNA"/>
</dbReference>
<dbReference type="EMBL" id="BT044504">
    <property type="protein sequence ID" value="ACH95278.1"/>
    <property type="molecule type" value="mRNA"/>
</dbReference>
<dbReference type="EMBL" id="AY093423">
    <property type="protein sequence ID" value="AAM18800.2"/>
    <property type="molecule type" value="mRNA"/>
</dbReference>
<dbReference type="EMBL" id="AY207374">
    <property type="protein sequence ID" value="AAO48768.1"/>
    <property type="molecule type" value="mRNA"/>
</dbReference>
<dbReference type="EMBL" id="AY261675">
    <property type="protein sequence ID" value="AAP20871.1"/>
    <property type="molecule type" value="mRNA"/>
</dbReference>
<dbReference type="RefSeq" id="NP_730600.1">
    <property type="nucleotide sequence ID" value="NM_168884.2"/>
</dbReference>
<dbReference type="RefSeq" id="NP_730601.1">
    <property type="nucleotide sequence ID" value="NM_168885.3"/>
</dbReference>
<dbReference type="PDB" id="2LWR">
    <property type="method" value="NMR"/>
    <property type="chains" value="A=417-482"/>
</dbReference>
<dbReference type="PDB" id="2M48">
    <property type="method" value="NMR"/>
    <property type="chains" value="A=342-482"/>
</dbReference>
<dbReference type="PDB" id="9C5E">
    <property type="method" value="NMR"/>
    <property type="chains" value="A=410-482"/>
</dbReference>
<dbReference type="PDBsum" id="2LWR"/>
<dbReference type="PDBsum" id="2M48"/>
<dbReference type="PDBsum" id="9C5E"/>
<dbReference type="SMR" id="Q7KTX7"/>
<dbReference type="DIP" id="DIP-58616N"/>
<dbReference type="FunCoup" id="Q7KTX7">
    <property type="interactions" value="797"/>
</dbReference>
<dbReference type="IntAct" id="Q7KTX7">
    <property type="interactions" value="28"/>
</dbReference>
<dbReference type="STRING" id="7227.FBpp0077974"/>
<dbReference type="iPTMnet" id="Q7KTX7"/>
<dbReference type="PaxDb" id="7227-FBpp0077974"/>
<dbReference type="DNASU" id="40336"/>
<dbReference type="EnsemblMetazoa" id="FBtr0078318">
    <property type="protein sequence ID" value="FBpp0077974"/>
    <property type="gene ID" value="FBgn0041100"/>
</dbReference>
<dbReference type="EnsemblMetazoa" id="FBtr0078319">
    <property type="protein sequence ID" value="FBpp0077975"/>
    <property type="gene ID" value="FBgn0041100"/>
</dbReference>
<dbReference type="GeneID" id="40336"/>
<dbReference type="KEGG" id="dme:Dmel_CG10523"/>
<dbReference type="UCSC" id="CG10523-RB">
    <property type="organism name" value="d. melanogaster"/>
</dbReference>
<dbReference type="AGR" id="FB:FBgn0041100"/>
<dbReference type="CTD" id="40336"/>
<dbReference type="FlyBase" id="FBgn0041100">
    <property type="gene designation" value="park"/>
</dbReference>
<dbReference type="VEuPathDB" id="VectorBase:FBgn0041100"/>
<dbReference type="eggNOG" id="KOG0006">
    <property type="taxonomic scope" value="Eukaryota"/>
</dbReference>
<dbReference type="GeneTree" id="ENSGT00390000011034"/>
<dbReference type="HOGENOM" id="CLU_050804_0_0_1"/>
<dbReference type="InParanoid" id="Q7KTX7"/>
<dbReference type="OMA" id="DPKWDIK"/>
<dbReference type="OrthoDB" id="1431934at2759"/>
<dbReference type="PhylomeDB" id="Q7KTX7"/>
<dbReference type="Reactome" id="R-DME-5205685">
    <property type="pathway name" value="PINK1-PRKN Mediated Mitophagy"/>
</dbReference>
<dbReference type="Reactome" id="R-DME-5689877">
    <property type="pathway name" value="Josephin domain DUBs"/>
</dbReference>
<dbReference type="Reactome" id="R-DME-9646399">
    <property type="pathway name" value="Aggrephagy"/>
</dbReference>
<dbReference type="Reactome" id="R-DME-983168">
    <property type="pathway name" value="Antigen processing: Ubiquitination &amp; Proteasome degradation"/>
</dbReference>
<dbReference type="UniPathway" id="UPA00143"/>
<dbReference type="BioGRID-ORCS" id="40336">
    <property type="hits" value="0 hits in 1 CRISPR screen"/>
</dbReference>
<dbReference type="EvolutionaryTrace" id="Q7KTX7"/>
<dbReference type="GenomeRNAi" id="40336"/>
<dbReference type="PRO" id="PR:Q7KTX7"/>
<dbReference type="Proteomes" id="UP000000803">
    <property type="component" value="Chromosome 3L"/>
</dbReference>
<dbReference type="Bgee" id="FBgn0041100">
    <property type="expression patterns" value="Expressed in spermatocyte in testis and 42 other cell types or tissues"/>
</dbReference>
<dbReference type="ExpressionAtlas" id="Q7KTX7">
    <property type="expression patterns" value="baseline and differential"/>
</dbReference>
<dbReference type="GO" id="GO:0005737">
    <property type="term" value="C:cytoplasm"/>
    <property type="evidence" value="ECO:0000314"/>
    <property type="project" value="UniProtKB"/>
</dbReference>
<dbReference type="GO" id="GO:0005829">
    <property type="term" value="C:cytosol"/>
    <property type="evidence" value="ECO:0000318"/>
    <property type="project" value="GO_Central"/>
</dbReference>
<dbReference type="GO" id="GO:0005783">
    <property type="term" value="C:endoplasmic reticulum"/>
    <property type="evidence" value="ECO:0000318"/>
    <property type="project" value="GO_Central"/>
</dbReference>
<dbReference type="GO" id="GO:0005794">
    <property type="term" value="C:Golgi apparatus"/>
    <property type="evidence" value="ECO:0000318"/>
    <property type="project" value="GO_Central"/>
</dbReference>
<dbReference type="GO" id="GO:0005739">
    <property type="term" value="C:mitochondrion"/>
    <property type="evidence" value="ECO:0000314"/>
    <property type="project" value="UniProtKB"/>
</dbReference>
<dbReference type="GO" id="GO:0000151">
    <property type="term" value="C:ubiquitin ligase complex"/>
    <property type="evidence" value="ECO:0000318"/>
    <property type="project" value="GO_Central"/>
</dbReference>
<dbReference type="GO" id="GO:0031624">
    <property type="term" value="F:ubiquitin conjugating enzyme binding"/>
    <property type="evidence" value="ECO:0000318"/>
    <property type="project" value="GO_Central"/>
</dbReference>
<dbReference type="GO" id="GO:0061630">
    <property type="term" value="F:ubiquitin protein ligase activity"/>
    <property type="evidence" value="ECO:0000314"/>
    <property type="project" value="UniProtKB"/>
</dbReference>
<dbReference type="GO" id="GO:0008270">
    <property type="term" value="F:zinc ion binding"/>
    <property type="evidence" value="ECO:0007669"/>
    <property type="project" value="UniProtKB-KW"/>
</dbReference>
<dbReference type="GO" id="GO:0008344">
    <property type="term" value="P:adult locomotory behavior"/>
    <property type="evidence" value="ECO:0000315"/>
    <property type="project" value="FlyBase"/>
</dbReference>
<dbReference type="GO" id="GO:0008345">
    <property type="term" value="P:larval locomotory behavior"/>
    <property type="evidence" value="ECO:0000315"/>
    <property type="project" value="FlyBase"/>
</dbReference>
<dbReference type="GO" id="GO:0000266">
    <property type="term" value="P:mitochondrial fission"/>
    <property type="evidence" value="ECO:0000316"/>
    <property type="project" value="FlyBase"/>
</dbReference>
<dbReference type="GO" id="GO:0007005">
    <property type="term" value="P:mitochondrion organization"/>
    <property type="evidence" value="ECO:0000315"/>
    <property type="project" value="FlyBase"/>
</dbReference>
<dbReference type="GO" id="GO:0000423">
    <property type="term" value="P:mitophagy"/>
    <property type="evidence" value="ECO:0000315"/>
    <property type="project" value="FlyBase"/>
</dbReference>
<dbReference type="GO" id="GO:0046329">
    <property type="term" value="P:negative regulation of JNK cascade"/>
    <property type="evidence" value="ECO:0000314"/>
    <property type="project" value="FlyBase"/>
</dbReference>
<dbReference type="GO" id="GO:0010637">
    <property type="term" value="P:negative regulation of mitochondrial fusion"/>
    <property type="evidence" value="ECO:0000315"/>
    <property type="project" value="FlyBase"/>
</dbReference>
<dbReference type="GO" id="GO:0070050">
    <property type="term" value="P:neuron cellular homeostasis"/>
    <property type="evidence" value="ECO:0000315"/>
    <property type="project" value="FlyBase"/>
</dbReference>
<dbReference type="GO" id="GO:0048477">
    <property type="term" value="P:oogenesis"/>
    <property type="evidence" value="ECO:0000315"/>
    <property type="project" value="FlyBase"/>
</dbReference>
<dbReference type="GO" id="GO:1903599">
    <property type="term" value="P:positive regulation of autophagy of mitochondrion"/>
    <property type="evidence" value="ECO:0000315"/>
    <property type="project" value="UniProtKB"/>
</dbReference>
<dbReference type="GO" id="GO:0048078">
    <property type="term" value="P:positive regulation of compound eye pigmentation"/>
    <property type="evidence" value="ECO:0000315"/>
    <property type="project" value="BHF-UCL"/>
</dbReference>
<dbReference type="GO" id="GO:1904061">
    <property type="term" value="P:positive regulation of locomotor rhythm"/>
    <property type="evidence" value="ECO:0000315"/>
    <property type="project" value="UniProtKB"/>
</dbReference>
<dbReference type="GO" id="GO:0090141">
    <property type="term" value="P:positive regulation of mitochondrial fission"/>
    <property type="evidence" value="ECO:0000315"/>
    <property type="project" value="FlyBase"/>
</dbReference>
<dbReference type="GO" id="GO:1901526">
    <property type="term" value="P:positive regulation of mitophagy"/>
    <property type="evidence" value="ECO:0000315"/>
    <property type="project" value="UniProtKB"/>
</dbReference>
<dbReference type="GO" id="GO:1904457">
    <property type="term" value="P:positive regulation of neuronal action potential"/>
    <property type="evidence" value="ECO:0000315"/>
    <property type="project" value="UniProtKB"/>
</dbReference>
<dbReference type="GO" id="GO:0051865">
    <property type="term" value="P:protein autoubiquitination"/>
    <property type="evidence" value="ECO:0000314"/>
    <property type="project" value="FlyBase"/>
</dbReference>
<dbReference type="GO" id="GO:0006513">
    <property type="term" value="P:protein monoubiquitination"/>
    <property type="evidence" value="ECO:0000314"/>
    <property type="project" value="FlyBase"/>
</dbReference>
<dbReference type="GO" id="GO:0000209">
    <property type="term" value="P:protein polyubiquitination"/>
    <property type="evidence" value="ECO:0000314"/>
    <property type="project" value="FlyBase"/>
</dbReference>
<dbReference type="GO" id="GO:0016567">
    <property type="term" value="P:protein ubiquitination"/>
    <property type="evidence" value="ECO:0000314"/>
    <property type="project" value="FlyBase"/>
</dbReference>
<dbReference type="GO" id="GO:0042981">
    <property type="term" value="P:regulation of apoptotic process"/>
    <property type="evidence" value="ECO:0000318"/>
    <property type="project" value="GO_Central"/>
</dbReference>
<dbReference type="GO" id="GO:1900407">
    <property type="term" value="P:regulation of cellular response to oxidative stress"/>
    <property type="evidence" value="ECO:0000314"/>
    <property type="project" value="FlyBase"/>
</dbReference>
<dbReference type="GO" id="GO:0010821">
    <property type="term" value="P:regulation of mitochondrion organization"/>
    <property type="evidence" value="ECO:0000315"/>
    <property type="project" value="FlyBase"/>
</dbReference>
<dbReference type="GO" id="GO:0006979">
    <property type="term" value="P:response to oxidative stress"/>
    <property type="evidence" value="ECO:0000315"/>
    <property type="project" value="FlyBase"/>
</dbReference>
<dbReference type="GO" id="GO:0030382">
    <property type="term" value="P:sperm mitochondrion organization"/>
    <property type="evidence" value="ECO:0000315"/>
    <property type="project" value="UniProtKB"/>
</dbReference>
<dbReference type="GO" id="GO:0007283">
    <property type="term" value="P:spermatogenesis"/>
    <property type="evidence" value="ECO:0000315"/>
    <property type="project" value="FlyBase"/>
</dbReference>
<dbReference type="GO" id="GO:0061734">
    <property type="term" value="P:type 2 mitophagy"/>
    <property type="evidence" value="ECO:0000315"/>
    <property type="project" value="UniProtKB"/>
</dbReference>
<dbReference type="GO" id="GO:0006511">
    <property type="term" value="P:ubiquitin-dependent protein catabolic process"/>
    <property type="evidence" value="ECO:0000315"/>
    <property type="project" value="FlyBase"/>
</dbReference>
<dbReference type="CDD" id="cd20340">
    <property type="entry name" value="BRcat_RBR_parkin"/>
    <property type="match status" value="1"/>
</dbReference>
<dbReference type="CDD" id="cd20357">
    <property type="entry name" value="Rcat_RBR_parkin"/>
    <property type="match status" value="1"/>
</dbReference>
<dbReference type="CDD" id="cd16627">
    <property type="entry name" value="RING-HC_RBR_parkin"/>
    <property type="match status" value="1"/>
</dbReference>
<dbReference type="CDD" id="cd21382">
    <property type="entry name" value="RING0_parkin"/>
    <property type="match status" value="1"/>
</dbReference>
<dbReference type="CDD" id="cd01798">
    <property type="entry name" value="Ubl_parkin"/>
    <property type="match status" value="1"/>
</dbReference>
<dbReference type="FunFam" id="1.20.120.1750:FF:000009">
    <property type="entry name" value="E3 ubiquitin-protein ligase parkin"/>
    <property type="match status" value="1"/>
</dbReference>
<dbReference type="FunFam" id="2.20.25.20:FF:000008">
    <property type="entry name" value="E3 ubiquitin-protein ligase parkin"/>
    <property type="match status" value="1"/>
</dbReference>
<dbReference type="FunFam" id="3.10.20.90:FF:000484">
    <property type="entry name" value="E3 ubiquitin-protein ligase parkin"/>
    <property type="match status" value="1"/>
</dbReference>
<dbReference type="Gene3D" id="1.20.120.1750">
    <property type="match status" value="1"/>
</dbReference>
<dbReference type="Gene3D" id="2.20.25.20">
    <property type="match status" value="1"/>
</dbReference>
<dbReference type="Gene3D" id="3.10.20.90">
    <property type="entry name" value="Phosphatidylinositol 3-kinase Catalytic Subunit, Chain A, domain 1"/>
    <property type="match status" value="1"/>
</dbReference>
<dbReference type="Gene3D" id="3.30.40.10">
    <property type="entry name" value="Zinc/RING finger domain, C3HC4 (zinc finger)"/>
    <property type="match status" value="1"/>
</dbReference>
<dbReference type="InterPro" id="IPR047534">
    <property type="entry name" value="BRcat_RBR_parkin"/>
</dbReference>
<dbReference type="InterPro" id="IPR031127">
    <property type="entry name" value="E3_UB_ligase_RBR"/>
</dbReference>
<dbReference type="InterPro" id="IPR002867">
    <property type="entry name" value="IBR_dom"/>
</dbReference>
<dbReference type="InterPro" id="IPR003977">
    <property type="entry name" value="Parkin"/>
</dbReference>
<dbReference type="InterPro" id="IPR054694">
    <property type="entry name" value="Parkin-like_IBR"/>
</dbReference>
<dbReference type="InterPro" id="IPR041565">
    <property type="entry name" value="Parkin_Znf-RING"/>
</dbReference>
<dbReference type="InterPro" id="IPR047536">
    <property type="entry name" value="Rcat_RBR_parkin"/>
</dbReference>
<dbReference type="InterPro" id="IPR047535">
    <property type="entry name" value="RING-HC_RBR_parkin"/>
</dbReference>
<dbReference type="InterPro" id="IPR044066">
    <property type="entry name" value="TRIAD_supradom"/>
</dbReference>
<dbReference type="InterPro" id="IPR000626">
    <property type="entry name" value="Ubiquitin-like_dom"/>
</dbReference>
<dbReference type="InterPro" id="IPR029071">
    <property type="entry name" value="Ubiquitin-like_domsf"/>
</dbReference>
<dbReference type="InterPro" id="IPR041170">
    <property type="entry name" value="Znf-RING_14"/>
</dbReference>
<dbReference type="InterPro" id="IPR013083">
    <property type="entry name" value="Znf_RING/FYVE/PHD"/>
</dbReference>
<dbReference type="PANTHER" id="PTHR11685">
    <property type="entry name" value="RBR FAMILY RING FINGER AND IBR DOMAIN-CONTAINING"/>
    <property type="match status" value="1"/>
</dbReference>
<dbReference type="Pfam" id="PF22605">
    <property type="entry name" value="IBR_2"/>
    <property type="match status" value="1"/>
</dbReference>
<dbReference type="Pfam" id="PF00240">
    <property type="entry name" value="ubiquitin"/>
    <property type="match status" value="1"/>
</dbReference>
<dbReference type="Pfam" id="PF17976">
    <property type="entry name" value="zf-RING_12"/>
    <property type="match status" value="1"/>
</dbReference>
<dbReference type="Pfam" id="PF17978">
    <property type="entry name" value="zf-RING_14"/>
    <property type="match status" value="1"/>
</dbReference>
<dbReference type="PIRSF" id="PIRSF037880">
    <property type="entry name" value="Parkin"/>
    <property type="match status" value="1"/>
</dbReference>
<dbReference type="PRINTS" id="PR01475">
    <property type="entry name" value="PARKIN"/>
</dbReference>
<dbReference type="SMART" id="SM00647">
    <property type="entry name" value="IBR"/>
    <property type="match status" value="2"/>
</dbReference>
<dbReference type="SMART" id="SM00213">
    <property type="entry name" value="UBQ"/>
    <property type="match status" value="1"/>
</dbReference>
<dbReference type="SUPFAM" id="SSF57850">
    <property type="entry name" value="RING/U-box"/>
    <property type="match status" value="3"/>
</dbReference>
<dbReference type="SUPFAM" id="SSF54236">
    <property type="entry name" value="Ubiquitin-like"/>
    <property type="match status" value="1"/>
</dbReference>
<dbReference type="PROSITE" id="PS51873">
    <property type="entry name" value="TRIAD"/>
    <property type="match status" value="1"/>
</dbReference>
<dbReference type="PROSITE" id="PS50053">
    <property type="entry name" value="UBIQUITIN_2"/>
    <property type="match status" value="1"/>
</dbReference>